<sequence>MKTSILILAAGLGTRMKSQKPKVLQELCQKSMILHILKKAFALSDDVSVVLSHQKERVEKEILEHFPKTQILEQDLQNYPGTAGALRGFEPKNERVLILCGDMPLVEQTSLEALLGNNAKLNLAVFKARDSKSYGRVVIKDDGVEKIVEFKDANAREREINTCNAGVYVIDSRLLKELLPLIDNNNAAKEYYLTDIVKLAKEKDVMIKAVFVDEDEFMGINDKFELSIAENFMQEKIKKYWMQQGVIFHLPQSTFIGVDVKFVGECEVYENVRIGGKSKIINSIIKSSSVIENSIVENSDVGPLAHLRPNCELKNTHIGNFVECKNANLNAVKAGHLSYLGDCEIDSGTNIGCGTITCNYDGVKKYKTIIGKNVFVGSDTQFIAPVKIEDEVIIAAGSTVSVNVEKGALFINRTGHKIIKNYYYKKFQK</sequence>
<dbReference type="EC" id="2.7.7.23" evidence="1"/>
<dbReference type="EC" id="2.3.1.157" evidence="1"/>
<dbReference type="EMBL" id="CP000768">
    <property type="protein sequence ID" value="ABS44851.1"/>
    <property type="molecule type" value="Genomic_DNA"/>
</dbReference>
<dbReference type="SMR" id="A7H432"/>
<dbReference type="KEGG" id="cjd:JJD26997_1193"/>
<dbReference type="HOGENOM" id="CLU_029499_15_2_7"/>
<dbReference type="UniPathway" id="UPA00113">
    <property type="reaction ID" value="UER00532"/>
</dbReference>
<dbReference type="UniPathway" id="UPA00113">
    <property type="reaction ID" value="UER00533"/>
</dbReference>
<dbReference type="UniPathway" id="UPA00973"/>
<dbReference type="Proteomes" id="UP000002302">
    <property type="component" value="Chromosome"/>
</dbReference>
<dbReference type="GO" id="GO:0005737">
    <property type="term" value="C:cytoplasm"/>
    <property type="evidence" value="ECO:0007669"/>
    <property type="project" value="UniProtKB-SubCell"/>
</dbReference>
<dbReference type="GO" id="GO:0016020">
    <property type="term" value="C:membrane"/>
    <property type="evidence" value="ECO:0007669"/>
    <property type="project" value="GOC"/>
</dbReference>
<dbReference type="GO" id="GO:0019134">
    <property type="term" value="F:glucosamine-1-phosphate N-acetyltransferase activity"/>
    <property type="evidence" value="ECO:0007669"/>
    <property type="project" value="UniProtKB-UniRule"/>
</dbReference>
<dbReference type="GO" id="GO:0000287">
    <property type="term" value="F:magnesium ion binding"/>
    <property type="evidence" value="ECO:0007669"/>
    <property type="project" value="UniProtKB-UniRule"/>
</dbReference>
<dbReference type="GO" id="GO:0003977">
    <property type="term" value="F:UDP-N-acetylglucosamine diphosphorylase activity"/>
    <property type="evidence" value="ECO:0007669"/>
    <property type="project" value="UniProtKB-UniRule"/>
</dbReference>
<dbReference type="GO" id="GO:0000902">
    <property type="term" value="P:cell morphogenesis"/>
    <property type="evidence" value="ECO:0007669"/>
    <property type="project" value="UniProtKB-UniRule"/>
</dbReference>
<dbReference type="GO" id="GO:0071555">
    <property type="term" value="P:cell wall organization"/>
    <property type="evidence" value="ECO:0007669"/>
    <property type="project" value="UniProtKB-KW"/>
</dbReference>
<dbReference type="GO" id="GO:0009245">
    <property type="term" value="P:lipid A biosynthetic process"/>
    <property type="evidence" value="ECO:0007669"/>
    <property type="project" value="UniProtKB-UniRule"/>
</dbReference>
<dbReference type="GO" id="GO:0009252">
    <property type="term" value="P:peptidoglycan biosynthetic process"/>
    <property type="evidence" value="ECO:0007669"/>
    <property type="project" value="UniProtKB-UniRule"/>
</dbReference>
<dbReference type="GO" id="GO:0008360">
    <property type="term" value="P:regulation of cell shape"/>
    <property type="evidence" value="ECO:0007669"/>
    <property type="project" value="UniProtKB-KW"/>
</dbReference>
<dbReference type="GO" id="GO:0006048">
    <property type="term" value="P:UDP-N-acetylglucosamine biosynthetic process"/>
    <property type="evidence" value="ECO:0007669"/>
    <property type="project" value="UniProtKB-UniPathway"/>
</dbReference>
<dbReference type="CDD" id="cd02540">
    <property type="entry name" value="GT2_GlmU_N_bac"/>
    <property type="match status" value="1"/>
</dbReference>
<dbReference type="Gene3D" id="2.160.10.10">
    <property type="entry name" value="Hexapeptide repeat proteins"/>
    <property type="match status" value="1"/>
</dbReference>
<dbReference type="Gene3D" id="3.90.550.10">
    <property type="entry name" value="Spore Coat Polysaccharide Biosynthesis Protein SpsA, Chain A"/>
    <property type="match status" value="1"/>
</dbReference>
<dbReference type="HAMAP" id="MF_01631">
    <property type="entry name" value="GlmU"/>
    <property type="match status" value="1"/>
</dbReference>
<dbReference type="InterPro" id="IPR005882">
    <property type="entry name" value="Bifunctional_GlmU"/>
</dbReference>
<dbReference type="InterPro" id="IPR050065">
    <property type="entry name" value="GlmU-like"/>
</dbReference>
<dbReference type="InterPro" id="IPR001451">
    <property type="entry name" value="Hexapep"/>
</dbReference>
<dbReference type="InterPro" id="IPR025877">
    <property type="entry name" value="MobA-like_NTP_Trfase"/>
</dbReference>
<dbReference type="InterPro" id="IPR029044">
    <property type="entry name" value="Nucleotide-diphossugar_trans"/>
</dbReference>
<dbReference type="InterPro" id="IPR011004">
    <property type="entry name" value="Trimer_LpxA-like_sf"/>
</dbReference>
<dbReference type="NCBIfam" id="TIGR01173">
    <property type="entry name" value="glmU"/>
    <property type="match status" value="1"/>
</dbReference>
<dbReference type="NCBIfam" id="NF010939">
    <property type="entry name" value="PRK14359.1"/>
    <property type="match status" value="1"/>
</dbReference>
<dbReference type="PANTHER" id="PTHR43584:SF3">
    <property type="entry name" value="BIFUNCTIONAL PROTEIN GLMU"/>
    <property type="match status" value="1"/>
</dbReference>
<dbReference type="PANTHER" id="PTHR43584">
    <property type="entry name" value="NUCLEOTIDYL TRANSFERASE"/>
    <property type="match status" value="1"/>
</dbReference>
<dbReference type="Pfam" id="PF00132">
    <property type="entry name" value="Hexapep"/>
    <property type="match status" value="1"/>
</dbReference>
<dbReference type="Pfam" id="PF12804">
    <property type="entry name" value="NTP_transf_3"/>
    <property type="match status" value="1"/>
</dbReference>
<dbReference type="SUPFAM" id="SSF53448">
    <property type="entry name" value="Nucleotide-diphospho-sugar transferases"/>
    <property type="match status" value="1"/>
</dbReference>
<dbReference type="SUPFAM" id="SSF51161">
    <property type="entry name" value="Trimeric LpxA-like enzymes"/>
    <property type="match status" value="1"/>
</dbReference>
<organism>
    <name type="scientific">Campylobacter jejuni subsp. doylei (strain ATCC BAA-1458 / RM4099 / 269.97)</name>
    <dbReference type="NCBI Taxonomy" id="360109"/>
    <lineage>
        <taxon>Bacteria</taxon>
        <taxon>Pseudomonadati</taxon>
        <taxon>Campylobacterota</taxon>
        <taxon>Epsilonproteobacteria</taxon>
        <taxon>Campylobacterales</taxon>
        <taxon>Campylobacteraceae</taxon>
        <taxon>Campylobacter</taxon>
    </lineage>
</organism>
<keyword id="KW-0012">Acyltransferase</keyword>
<keyword id="KW-0133">Cell shape</keyword>
<keyword id="KW-0961">Cell wall biogenesis/degradation</keyword>
<keyword id="KW-0963">Cytoplasm</keyword>
<keyword id="KW-0460">Magnesium</keyword>
<keyword id="KW-0479">Metal-binding</keyword>
<keyword id="KW-0511">Multifunctional enzyme</keyword>
<keyword id="KW-0548">Nucleotidyltransferase</keyword>
<keyword id="KW-0573">Peptidoglycan synthesis</keyword>
<keyword id="KW-0677">Repeat</keyword>
<keyword id="KW-0808">Transferase</keyword>
<accession>A7H432</accession>
<name>GLMU_CAMJD</name>
<protein>
    <recommendedName>
        <fullName evidence="1">Bifunctional protein GlmU</fullName>
    </recommendedName>
    <domain>
        <recommendedName>
            <fullName evidence="1">UDP-N-acetylglucosamine pyrophosphorylase</fullName>
            <ecNumber evidence="1">2.7.7.23</ecNumber>
        </recommendedName>
        <alternativeName>
            <fullName evidence="1">N-acetylglucosamine-1-phosphate uridyltransferase</fullName>
        </alternativeName>
    </domain>
    <domain>
        <recommendedName>
            <fullName evidence="1">Glucosamine-1-phosphate N-acetyltransferase</fullName>
            <ecNumber evidence="1">2.3.1.157</ecNumber>
        </recommendedName>
    </domain>
</protein>
<feature type="chain" id="PRO_1000056147" description="Bifunctional protein GlmU">
    <location>
        <begin position="1"/>
        <end position="429"/>
    </location>
</feature>
<feature type="region of interest" description="Pyrophosphorylase" evidence="1">
    <location>
        <begin position="1"/>
        <end position="223"/>
    </location>
</feature>
<feature type="region of interest" description="Linker" evidence="1">
    <location>
        <begin position="224"/>
        <end position="244"/>
    </location>
</feature>
<feature type="region of interest" description="N-acetyltransferase" evidence="1">
    <location>
        <begin position="245"/>
        <end position="429"/>
    </location>
</feature>
<feature type="active site" description="Proton acceptor" evidence="1">
    <location>
        <position position="336"/>
    </location>
</feature>
<feature type="binding site" evidence="1">
    <location>
        <begin position="8"/>
        <end position="11"/>
    </location>
    <ligand>
        <name>UDP-N-acetyl-alpha-D-glucosamine</name>
        <dbReference type="ChEBI" id="CHEBI:57705"/>
    </ligand>
</feature>
<feature type="binding site" evidence="1">
    <location>
        <position position="22"/>
    </location>
    <ligand>
        <name>UDP-N-acetyl-alpha-D-glucosamine</name>
        <dbReference type="ChEBI" id="CHEBI:57705"/>
    </ligand>
</feature>
<feature type="binding site" evidence="1">
    <location>
        <position position="74"/>
    </location>
    <ligand>
        <name>UDP-N-acetyl-alpha-D-glucosamine</name>
        <dbReference type="ChEBI" id="CHEBI:57705"/>
    </ligand>
</feature>
<feature type="binding site" evidence="1">
    <location>
        <begin position="81"/>
        <end position="82"/>
    </location>
    <ligand>
        <name>UDP-N-acetyl-alpha-D-glucosamine</name>
        <dbReference type="ChEBI" id="CHEBI:57705"/>
    </ligand>
</feature>
<feature type="binding site" evidence="1">
    <location>
        <position position="102"/>
    </location>
    <ligand>
        <name>Mg(2+)</name>
        <dbReference type="ChEBI" id="CHEBI:18420"/>
    </ligand>
</feature>
<feature type="binding site" evidence="1">
    <location>
        <position position="135"/>
    </location>
    <ligand>
        <name>UDP-N-acetyl-alpha-D-glucosamine</name>
        <dbReference type="ChEBI" id="CHEBI:57705"/>
    </ligand>
</feature>
<feature type="binding site" evidence="1">
    <location>
        <position position="149"/>
    </location>
    <ligand>
        <name>UDP-N-acetyl-alpha-D-glucosamine</name>
        <dbReference type="ChEBI" id="CHEBI:57705"/>
    </ligand>
</feature>
<feature type="binding site" evidence="1">
    <location>
        <position position="164"/>
    </location>
    <ligand>
        <name>UDP-N-acetyl-alpha-D-glucosamine</name>
        <dbReference type="ChEBI" id="CHEBI:57705"/>
    </ligand>
</feature>
<feature type="binding site" evidence="1">
    <location>
        <position position="221"/>
    </location>
    <ligand>
        <name>Mg(2+)</name>
        <dbReference type="ChEBI" id="CHEBI:18420"/>
    </ligand>
</feature>
<feature type="binding site" evidence="1">
    <location>
        <position position="221"/>
    </location>
    <ligand>
        <name>UDP-N-acetyl-alpha-D-glucosamine</name>
        <dbReference type="ChEBI" id="CHEBI:57705"/>
    </ligand>
</feature>
<feature type="binding site" evidence="1">
    <location>
        <position position="308"/>
    </location>
    <ligand>
        <name>UDP-N-acetyl-alpha-D-glucosamine</name>
        <dbReference type="ChEBI" id="CHEBI:57705"/>
    </ligand>
</feature>
<feature type="binding site" evidence="1">
    <location>
        <position position="325"/>
    </location>
    <ligand>
        <name>UDP-N-acetyl-alpha-D-glucosamine</name>
        <dbReference type="ChEBI" id="CHEBI:57705"/>
    </ligand>
</feature>
<feature type="binding site" evidence="1">
    <location>
        <position position="339"/>
    </location>
    <ligand>
        <name>UDP-N-acetyl-alpha-D-glucosamine</name>
        <dbReference type="ChEBI" id="CHEBI:57705"/>
    </ligand>
</feature>
<feature type="binding site" evidence="1">
    <location>
        <position position="350"/>
    </location>
    <ligand>
        <name>UDP-N-acetyl-alpha-D-glucosamine</name>
        <dbReference type="ChEBI" id="CHEBI:57705"/>
    </ligand>
</feature>
<feature type="binding site" evidence="1">
    <location>
        <begin position="359"/>
        <end position="360"/>
    </location>
    <ligand>
        <name>acetyl-CoA</name>
        <dbReference type="ChEBI" id="CHEBI:57288"/>
    </ligand>
</feature>
<feature type="binding site" evidence="1">
    <location>
        <position position="378"/>
    </location>
    <ligand>
        <name>acetyl-CoA</name>
        <dbReference type="ChEBI" id="CHEBI:57288"/>
    </ligand>
</feature>
<feature type="binding site" evidence="1">
    <location>
        <position position="396"/>
    </location>
    <ligand>
        <name>acetyl-CoA</name>
        <dbReference type="ChEBI" id="CHEBI:57288"/>
    </ligand>
</feature>
<feature type="binding site" evidence="1">
    <location>
        <position position="413"/>
    </location>
    <ligand>
        <name>acetyl-CoA</name>
        <dbReference type="ChEBI" id="CHEBI:57288"/>
    </ligand>
</feature>
<comment type="function">
    <text evidence="1">Catalyzes the last two sequential reactions in the de novo biosynthetic pathway for UDP-N-acetylglucosamine (UDP-GlcNAc). The C-terminal domain catalyzes the transfer of acetyl group from acetyl coenzyme A to glucosamine-1-phosphate (GlcN-1-P) to produce N-acetylglucosamine-1-phosphate (GlcNAc-1-P), which is converted into UDP-GlcNAc by the transfer of uridine 5-monophosphate (from uridine 5-triphosphate), a reaction catalyzed by the N-terminal domain.</text>
</comment>
<comment type="catalytic activity">
    <reaction evidence="1">
        <text>alpha-D-glucosamine 1-phosphate + acetyl-CoA = N-acetyl-alpha-D-glucosamine 1-phosphate + CoA + H(+)</text>
        <dbReference type="Rhea" id="RHEA:13725"/>
        <dbReference type="ChEBI" id="CHEBI:15378"/>
        <dbReference type="ChEBI" id="CHEBI:57287"/>
        <dbReference type="ChEBI" id="CHEBI:57288"/>
        <dbReference type="ChEBI" id="CHEBI:57776"/>
        <dbReference type="ChEBI" id="CHEBI:58516"/>
        <dbReference type="EC" id="2.3.1.157"/>
    </reaction>
</comment>
<comment type="catalytic activity">
    <reaction evidence="1">
        <text>N-acetyl-alpha-D-glucosamine 1-phosphate + UTP + H(+) = UDP-N-acetyl-alpha-D-glucosamine + diphosphate</text>
        <dbReference type="Rhea" id="RHEA:13509"/>
        <dbReference type="ChEBI" id="CHEBI:15378"/>
        <dbReference type="ChEBI" id="CHEBI:33019"/>
        <dbReference type="ChEBI" id="CHEBI:46398"/>
        <dbReference type="ChEBI" id="CHEBI:57705"/>
        <dbReference type="ChEBI" id="CHEBI:57776"/>
        <dbReference type="EC" id="2.7.7.23"/>
    </reaction>
</comment>
<comment type="cofactor">
    <cofactor evidence="1">
        <name>Mg(2+)</name>
        <dbReference type="ChEBI" id="CHEBI:18420"/>
    </cofactor>
    <text evidence="1">Binds 1 Mg(2+) ion per subunit.</text>
</comment>
<comment type="pathway">
    <text evidence="1">Nucleotide-sugar biosynthesis; UDP-N-acetyl-alpha-D-glucosamine biosynthesis; N-acetyl-alpha-D-glucosamine 1-phosphate from alpha-D-glucosamine 6-phosphate (route II): step 2/2.</text>
</comment>
<comment type="pathway">
    <text evidence="1">Nucleotide-sugar biosynthesis; UDP-N-acetyl-alpha-D-glucosamine biosynthesis; UDP-N-acetyl-alpha-D-glucosamine from N-acetyl-alpha-D-glucosamine 1-phosphate: step 1/1.</text>
</comment>
<comment type="pathway">
    <text evidence="1">Bacterial outer membrane biogenesis; LPS lipid A biosynthesis.</text>
</comment>
<comment type="subunit">
    <text evidence="1">Homotrimer.</text>
</comment>
<comment type="subcellular location">
    <subcellularLocation>
        <location evidence="1">Cytoplasm</location>
    </subcellularLocation>
</comment>
<comment type="similarity">
    <text evidence="1">In the N-terminal section; belongs to the N-acetylglucosamine-1-phosphate uridyltransferase family.</text>
</comment>
<comment type="similarity">
    <text evidence="1">In the C-terminal section; belongs to the transferase hexapeptide repeat family.</text>
</comment>
<evidence type="ECO:0000255" key="1">
    <source>
        <dbReference type="HAMAP-Rule" id="MF_01631"/>
    </source>
</evidence>
<reference key="1">
    <citation type="submission" date="2007-07" db="EMBL/GenBank/DDBJ databases">
        <title>Complete genome sequence of Campylobacter jejuni subsp doylei 269.97 isolated from human blood.</title>
        <authorList>
            <person name="Fouts D.E."/>
            <person name="Mongodin E.F."/>
            <person name="Puiu D."/>
            <person name="Sebastian Y."/>
            <person name="Miller W.G."/>
            <person name="Mandrell R.E."/>
            <person name="Lastovica A.J."/>
            <person name="Nelson K.E."/>
        </authorList>
    </citation>
    <scope>NUCLEOTIDE SEQUENCE [LARGE SCALE GENOMIC DNA]</scope>
    <source>
        <strain>ATCC BAA-1458 / RM4099 / 269.97</strain>
    </source>
</reference>
<gene>
    <name evidence="1" type="primary">glmU</name>
    <name type="ordered locus">JJD26997_1193</name>
</gene>
<proteinExistence type="inferred from homology"/>